<evidence type="ECO:0000255" key="1">
    <source>
        <dbReference type="HAMAP-Rule" id="MF_00240"/>
    </source>
</evidence>
<protein>
    <recommendedName>
        <fullName evidence="1">Outer-membrane lipoprotein carrier protein</fullName>
    </recommendedName>
</protein>
<accession>Q5X4E7</accession>
<organism>
    <name type="scientific">Legionella pneumophila (strain Paris)</name>
    <dbReference type="NCBI Taxonomy" id="297246"/>
    <lineage>
        <taxon>Bacteria</taxon>
        <taxon>Pseudomonadati</taxon>
        <taxon>Pseudomonadota</taxon>
        <taxon>Gammaproteobacteria</taxon>
        <taxon>Legionellales</taxon>
        <taxon>Legionellaceae</taxon>
        <taxon>Legionella</taxon>
    </lineage>
</organism>
<feature type="signal peptide" evidence="1">
    <location>
        <begin position="1"/>
        <end position="18"/>
    </location>
</feature>
<feature type="chain" id="PRO_1000071830" description="Outer-membrane lipoprotein carrier protein">
    <location>
        <begin position="19"/>
        <end position="202"/>
    </location>
</feature>
<gene>
    <name evidence="1" type="primary">lolA</name>
    <name type="ordered locus">lpp1729</name>
</gene>
<sequence>MNKLFLILLLIFSHEVFSQTSAEVLQSKLNAIQTMTANFSQIVKAKNHEVSRSSGSMALQRPGRFRWQTKDPLEQLIVADGQKMWIYDVDLEQVTVKNQEKGLGGTAALFLSGYDETLTHDFDVSEKQKGKLTVFDLKSKSAKENFQRIKLIFSQSALIGLELYDQLGQITDVKLVQIKSNPKLPAKLFQFKPPKGVDVVKQ</sequence>
<keyword id="KW-0143">Chaperone</keyword>
<keyword id="KW-0574">Periplasm</keyword>
<keyword id="KW-0653">Protein transport</keyword>
<keyword id="KW-0732">Signal</keyword>
<keyword id="KW-0813">Transport</keyword>
<reference key="1">
    <citation type="journal article" date="2004" name="Nat. Genet.">
        <title>Evidence in the Legionella pneumophila genome for exploitation of host cell functions and high genome plasticity.</title>
        <authorList>
            <person name="Cazalet C."/>
            <person name="Rusniok C."/>
            <person name="Brueggemann H."/>
            <person name="Zidane N."/>
            <person name="Magnier A."/>
            <person name="Ma L."/>
            <person name="Tichit M."/>
            <person name="Jarraud S."/>
            <person name="Bouchier C."/>
            <person name="Vandenesch F."/>
            <person name="Kunst F."/>
            <person name="Etienne J."/>
            <person name="Glaser P."/>
            <person name="Buchrieser C."/>
        </authorList>
    </citation>
    <scope>NUCLEOTIDE SEQUENCE [LARGE SCALE GENOMIC DNA]</scope>
    <source>
        <strain>Paris</strain>
    </source>
</reference>
<dbReference type="EMBL" id="CR628336">
    <property type="protein sequence ID" value="CAH12881.1"/>
    <property type="molecule type" value="Genomic_DNA"/>
</dbReference>
<dbReference type="RefSeq" id="WP_011214029.1">
    <property type="nucleotide sequence ID" value="NC_006368.1"/>
</dbReference>
<dbReference type="SMR" id="Q5X4E7"/>
<dbReference type="KEGG" id="lpp:lpp1729"/>
<dbReference type="LegioList" id="lpp1729"/>
<dbReference type="HOGENOM" id="CLU_087560_0_0_6"/>
<dbReference type="GO" id="GO:0030288">
    <property type="term" value="C:outer membrane-bounded periplasmic space"/>
    <property type="evidence" value="ECO:0007669"/>
    <property type="project" value="TreeGrafter"/>
</dbReference>
<dbReference type="GO" id="GO:0044874">
    <property type="term" value="P:lipoprotein localization to outer membrane"/>
    <property type="evidence" value="ECO:0007669"/>
    <property type="project" value="UniProtKB-UniRule"/>
</dbReference>
<dbReference type="GO" id="GO:0042953">
    <property type="term" value="P:lipoprotein transport"/>
    <property type="evidence" value="ECO:0007669"/>
    <property type="project" value="InterPro"/>
</dbReference>
<dbReference type="CDD" id="cd16325">
    <property type="entry name" value="LolA"/>
    <property type="match status" value="1"/>
</dbReference>
<dbReference type="Gene3D" id="2.50.20.10">
    <property type="entry name" value="Lipoprotein localisation LolA/LolB/LppX"/>
    <property type="match status" value="1"/>
</dbReference>
<dbReference type="HAMAP" id="MF_00240">
    <property type="entry name" value="LolA"/>
    <property type="match status" value="1"/>
</dbReference>
<dbReference type="InterPro" id="IPR029046">
    <property type="entry name" value="LolA/LolB/LppX"/>
</dbReference>
<dbReference type="InterPro" id="IPR004564">
    <property type="entry name" value="OM_lipoprot_carrier_LolA-like"/>
</dbReference>
<dbReference type="InterPro" id="IPR018323">
    <property type="entry name" value="OM_lipoprot_carrier_LolA_Pbac"/>
</dbReference>
<dbReference type="NCBIfam" id="TIGR00547">
    <property type="entry name" value="lolA"/>
    <property type="match status" value="1"/>
</dbReference>
<dbReference type="PANTHER" id="PTHR35869">
    <property type="entry name" value="OUTER-MEMBRANE LIPOPROTEIN CARRIER PROTEIN"/>
    <property type="match status" value="1"/>
</dbReference>
<dbReference type="PANTHER" id="PTHR35869:SF1">
    <property type="entry name" value="OUTER-MEMBRANE LIPOPROTEIN CARRIER PROTEIN"/>
    <property type="match status" value="1"/>
</dbReference>
<dbReference type="Pfam" id="PF03548">
    <property type="entry name" value="LolA"/>
    <property type="match status" value="1"/>
</dbReference>
<dbReference type="SUPFAM" id="SSF89392">
    <property type="entry name" value="Prokaryotic lipoproteins and lipoprotein localization factors"/>
    <property type="match status" value="1"/>
</dbReference>
<proteinExistence type="inferred from homology"/>
<name>LOLA_LEGPA</name>
<comment type="function">
    <text evidence="1">Participates in the translocation of lipoproteins from the inner membrane to the outer membrane. Only forms a complex with a lipoprotein if the residue after the N-terminal Cys is not an aspartate (The Asp acts as a targeting signal to indicate that the lipoprotein should stay in the inner membrane).</text>
</comment>
<comment type="subunit">
    <text evidence="1">Monomer.</text>
</comment>
<comment type="subcellular location">
    <subcellularLocation>
        <location evidence="1">Periplasm</location>
    </subcellularLocation>
</comment>
<comment type="similarity">
    <text evidence="1">Belongs to the LolA family.</text>
</comment>